<name>AT8_PLABA</name>
<reference evidence="9" key="1">
    <citation type="journal article" date="2014" name="BMC Biol.">
        <title>A comprehensive evaluation of rodent malaria parasite genomes and gene expression.</title>
        <authorList>
            <person name="Otto T.D."/>
            <person name="Bohme U."/>
            <person name="Jackson A.P."/>
            <person name="Hunt M."/>
            <person name="Franke-Fayard B."/>
            <person name="Hoeijmakers W.A."/>
            <person name="Religa A.A."/>
            <person name="Robertson L."/>
            <person name="Sanders M."/>
            <person name="Ogun S.A."/>
            <person name="Cunningham D."/>
            <person name="Erhart A."/>
            <person name="Billker O."/>
            <person name="Khan S.M."/>
            <person name="Stunnenberg H.G."/>
            <person name="Langhorne J."/>
            <person name="Holder A.A."/>
            <person name="Waters A.P."/>
            <person name="Newbold C.I."/>
            <person name="Pain A."/>
            <person name="Berriman M."/>
            <person name="Janse C.J."/>
        </authorList>
    </citation>
    <scope>NUCLEOTIDE SEQUENCE [LARGE SCALE GENOMIC DNA]</scope>
    <source>
        <strain evidence="9">ANKA</strain>
    </source>
</reference>
<reference evidence="7" key="2">
    <citation type="journal article" date="2011" name="Mol. Microbiol.">
        <title>The novel putative transporter NPT1 plays a critical role in early stages of Plasmodium berghei sexual development.</title>
        <authorList>
            <person name="Boisson B."/>
            <person name="Lacroix C."/>
            <person name="Bischoff E."/>
            <person name="Gueirard P."/>
            <person name="Bargieri D.Y."/>
            <person name="Franke-Fayard B."/>
            <person name="Janse C.J."/>
            <person name="Menard R."/>
            <person name="Baldacci P."/>
        </authorList>
    </citation>
    <scope>FUNCTION</scope>
    <scope>SUBCELLULAR LOCATION</scope>
    <scope>DEVELOPMENTAL STAGE</scope>
    <scope>DISRUPTION PHENOTYPE</scope>
    <source>
        <strain evidence="3">NK65</strain>
    </source>
</reference>
<reference evidence="7" key="3">
    <citation type="journal article" date="2017" name="Nat. Commun.">
        <title>Cationic amino acid transporters play key roles in the survival and transmission of apicomplexan parasites.</title>
        <authorList>
            <person name="Rajendran E."/>
            <person name="Hapuarachchi S.V."/>
            <person name="Miller C.M."/>
            <person name="Fairweather S.J."/>
            <person name="Cai Y."/>
            <person name="Smith N.C."/>
            <person name="Cockburn I.A."/>
            <person name="Broeer S."/>
            <person name="Kirk K."/>
            <person name="van Dooren G.G."/>
        </authorList>
    </citation>
    <scope>FUNCTION</scope>
    <scope>BIOPHYSICOCHEMICAL PROPERTIES</scope>
    <scope>SUBCELLULAR LOCATION</scope>
    <scope>DISRUPTION PHENOTYPE</scope>
</reference>
<reference evidence="7" key="4">
    <citation type="journal article" date="2019" name="PLoS Pathog.">
        <title>The tyrosine transporter of Toxoplasma gondii is a member of the newly defined apicomplexan amino acid transporter (ApiAT) family.</title>
        <authorList>
            <person name="Parker K.E.R."/>
            <person name="Fairweather S.J."/>
            <person name="Rajendran E."/>
            <person name="Blume M."/>
            <person name="McConville M.J."/>
            <person name="Broeer S."/>
            <person name="Kirk K."/>
            <person name="van Dooren G.G."/>
        </authorList>
    </citation>
    <scope>NOMENCLATURE</scope>
</reference>
<keyword id="KW-0029">Amino-acid transport</keyword>
<keyword id="KW-1003">Cell membrane</keyword>
<keyword id="KW-0325">Glycoprotein</keyword>
<keyword id="KW-0472">Membrane</keyword>
<keyword id="KW-1185">Reference proteome</keyword>
<keyword id="KW-0812">Transmembrane</keyword>
<keyword id="KW-1133">Transmembrane helix</keyword>
<keyword id="KW-0813">Transport</keyword>
<organism evidence="9">
    <name type="scientific">Plasmodium berghei (strain Anka)</name>
    <dbReference type="NCBI Taxonomy" id="5823"/>
    <lineage>
        <taxon>Eukaryota</taxon>
        <taxon>Sar</taxon>
        <taxon>Alveolata</taxon>
        <taxon>Apicomplexa</taxon>
        <taxon>Aconoidasida</taxon>
        <taxon>Haemosporida</taxon>
        <taxon>Plasmodiidae</taxon>
        <taxon>Plasmodium</taxon>
        <taxon>Plasmodium (Vinckeia)</taxon>
    </lineage>
</organism>
<proteinExistence type="evidence at protein level"/>
<accession>A0A509AE54</accession>
<evidence type="ECO:0000255" key="1"/>
<evidence type="ECO:0000255" key="2">
    <source>
        <dbReference type="PROSITE-ProRule" id="PRU00498"/>
    </source>
</evidence>
<evidence type="ECO:0000269" key="3">
    <source>
    </source>
</evidence>
<evidence type="ECO:0000269" key="4">
    <source>
    </source>
</evidence>
<evidence type="ECO:0000303" key="5">
    <source>
    </source>
</evidence>
<evidence type="ECO:0000303" key="6">
    <source>
    </source>
</evidence>
<evidence type="ECO:0000305" key="7"/>
<evidence type="ECO:0000312" key="8">
    <source>
        <dbReference type="EMBL" id="VUC53957.1"/>
    </source>
</evidence>
<evidence type="ECO:0000312" key="9">
    <source>
        <dbReference type="Proteomes" id="UP000074855"/>
    </source>
</evidence>
<feature type="chain" id="PRO_0000454213" description="Cationic amino acid transporter 8">
    <location>
        <begin position="1"/>
        <end position="506"/>
    </location>
</feature>
<feature type="transmembrane region" description="Helical" evidence="1">
    <location>
        <begin position="38"/>
        <end position="58"/>
    </location>
</feature>
<feature type="transmembrane region" description="Helical" evidence="1">
    <location>
        <begin position="93"/>
        <end position="113"/>
    </location>
</feature>
<feature type="transmembrane region" description="Helical" evidence="1">
    <location>
        <begin position="116"/>
        <end position="136"/>
    </location>
</feature>
<feature type="transmembrane region" description="Helical" evidence="1">
    <location>
        <begin position="147"/>
        <end position="167"/>
    </location>
</feature>
<feature type="transmembrane region" description="Helical" evidence="1">
    <location>
        <begin position="174"/>
        <end position="194"/>
    </location>
</feature>
<feature type="transmembrane region" description="Helical" evidence="1">
    <location>
        <begin position="211"/>
        <end position="231"/>
    </location>
</feature>
<feature type="transmembrane region" description="Helical" evidence="1">
    <location>
        <begin position="302"/>
        <end position="322"/>
    </location>
</feature>
<feature type="transmembrane region" description="Helical" evidence="1">
    <location>
        <begin position="344"/>
        <end position="364"/>
    </location>
</feature>
<feature type="transmembrane region" description="Helical" evidence="1">
    <location>
        <begin position="372"/>
        <end position="392"/>
    </location>
</feature>
<feature type="transmembrane region" description="Helical" evidence="1">
    <location>
        <begin position="399"/>
        <end position="419"/>
    </location>
</feature>
<feature type="transmembrane region" description="Helical" evidence="1">
    <location>
        <begin position="427"/>
        <end position="447"/>
    </location>
</feature>
<feature type="transmembrane region" description="Helical" evidence="1">
    <location>
        <begin position="466"/>
        <end position="486"/>
    </location>
</feature>
<feature type="glycosylation site" description="N-linked (GlcNAc...) asparagine" evidence="2">
    <location>
        <position position="2"/>
    </location>
</feature>
<feature type="glycosylation site" description="N-linked (GlcNAc...) asparagine" evidence="2">
    <location>
        <position position="5"/>
    </location>
</feature>
<feature type="glycosylation site" description="N-linked (GlcNAc...) asparagine" evidence="2">
    <location>
        <position position="75"/>
    </location>
</feature>
<feature type="glycosylation site" description="N-linked (GlcNAc...) asparagine" evidence="2">
    <location>
        <position position="277"/>
    </location>
</feature>
<feature type="glycosylation site" description="N-linked (GlcNAc...) asparagine" evidence="2">
    <location>
        <position position="325"/>
    </location>
</feature>
<feature type="glycosylation site" description="N-linked (GlcNAc...) asparagine" evidence="2">
    <location>
        <position position="342"/>
    </location>
</feature>
<feature type="glycosylation site" description="N-linked (GlcNAc...) asparagine" evidence="2">
    <location>
        <position position="453"/>
    </location>
</feature>
<feature type="glycosylation site" description="N-linked (GlcNAc...) asparagine" evidence="2">
    <location>
        <position position="456"/>
    </location>
</feature>
<dbReference type="EMBL" id="LK023117">
    <property type="protein sequence ID" value="VUC53957.1"/>
    <property type="molecule type" value="Genomic_DNA"/>
</dbReference>
<dbReference type="STRING" id="5823.A0A509AE54"/>
<dbReference type="GlyCosmos" id="A0A509AE54">
    <property type="glycosylation" value="8 sites, No reported glycans"/>
</dbReference>
<dbReference type="VEuPathDB" id="PlasmoDB:PBANKA_0208300"/>
<dbReference type="InParanoid" id="A0A509AE54"/>
<dbReference type="OMA" id="CAASIYT"/>
<dbReference type="Proteomes" id="UP000074855">
    <property type="component" value="Chromosome 2"/>
</dbReference>
<dbReference type="GO" id="GO:0005886">
    <property type="term" value="C:plasma membrane"/>
    <property type="evidence" value="ECO:0000314"/>
    <property type="project" value="UniProtKB"/>
</dbReference>
<dbReference type="GO" id="GO:0061459">
    <property type="term" value="F:L-arginine transmembrane transporter activity"/>
    <property type="evidence" value="ECO:0000315"/>
    <property type="project" value="UniProtKB"/>
</dbReference>
<dbReference type="GO" id="GO:0015189">
    <property type="term" value="F:L-lysine transmembrane transporter activity"/>
    <property type="evidence" value="ECO:0000315"/>
    <property type="project" value="UniProtKB"/>
</dbReference>
<dbReference type="GO" id="GO:0097638">
    <property type="term" value="P:L-arginine import across plasma membrane"/>
    <property type="evidence" value="ECO:0000315"/>
    <property type="project" value="UniProtKB"/>
</dbReference>
<dbReference type="GO" id="GO:0097639">
    <property type="term" value="P:L-lysine import across plasma membrane"/>
    <property type="evidence" value="ECO:0000315"/>
    <property type="project" value="UniProtKB"/>
</dbReference>
<dbReference type="Gene3D" id="1.20.1250.20">
    <property type="entry name" value="MFS general substrate transporter like domains"/>
    <property type="match status" value="1"/>
</dbReference>
<dbReference type="InterPro" id="IPR036259">
    <property type="entry name" value="MFS_trans_sf"/>
</dbReference>
<dbReference type="InterPro" id="IPR052599">
    <property type="entry name" value="SLC43A_AATransporter"/>
</dbReference>
<dbReference type="PANTHER" id="PTHR20772">
    <property type="entry name" value="PROTEIN FMP42"/>
    <property type="match status" value="1"/>
</dbReference>
<dbReference type="PANTHER" id="PTHR20772:SF2">
    <property type="entry name" value="PROTEIN FMP42"/>
    <property type="match status" value="1"/>
</dbReference>
<dbReference type="SUPFAM" id="SSF103473">
    <property type="entry name" value="MFS general substrate transporter"/>
    <property type="match status" value="1"/>
</dbReference>
<gene>
    <name evidence="6" type="primary">NPT1</name>
    <name evidence="5" type="synonym">ApiAT8</name>
    <name evidence="8" type="ORF">PBANKA_0208300</name>
</gene>
<protein>
    <recommendedName>
        <fullName evidence="6">Cationic amino acid transporter 8</fullName>
    </recommendedName>
    <alternativeName>
        <fullName evidence="6">Apicomplexan amino acid transporter 8</fullName>
        <shortName evidence="6">PbApiAT8</shortName>
    </alternativeName>
    <alternativeName>
        <fullName evidence="5">Novel putative transporter 1</fullName>
        <shortName evidence="5">PbNPT1</shortName>
    </alternativeName>
</protein>
<comment type="function">
    <text evidence="3 4">Cationic amino acid transporter which transports L-arginine, L-lysine and, to a lesser extent, L-histidine and ornithine (PubMed:28205520). Plays an essential role in gametogenesis (PubMed:21752110).</text>
</comment>
<comment type="biophysicochemical properties">
    <kinetics>
        <KM evidence="4">41 uM for arginine</KM>
        <KM evidence="4">130 uM for lysine</KM>
    </kinetics>
</comment>
<comment type="subcellular location">
    <subcellularLocation>
        <location evidence="3 4">Cell membrane</location>
        <topology evidence="1">Multi-pass membrane protein</topology>
    </subcellularLocation>
</comment>
<comment type="developmental stage">
    <text evidence="3">Expressed during the asexual blood stage including in trophozoites, schizonts and free merozoites (PubMed:21752110). Expressed in gametocytes (PubMed:21752110). Expressed during the liver stage (PubMed:21752110).</text>
</comment>
<comment type="disruption phenotype">
    <text evidence="3 4">Growth is normal in asexual blood stages, however uptake of arginine and lysine is decreased (PubMed:21752110, PubMed:28205520). Impaired production of male gametocytes and fertile female gametocytes (PubMed:21752110, PubMed:28205520). Rare gametocytes that are produced have unusual membrane structures (whorls) and large vacuoles in their cytoplasm (PubMed:21752110).</text>
</comment>
<comment type="similarity">
    <text evidence="7">Belongs to the SLC43A transporter (TC 2.A.1.44) family.</text>
</comment>
<sequence length="506" mass="57227">MNESNCTKIVNFLKGMRLKTNPNLPGAKQKTPLNIHRFYLLLIIIIYTATSACIYFDWTSIRNLLLNVGKYEHLNISKYADITLSPQYKKINNLYPMTLAIHFTMSVFCGFLYDHIGPKFTAIIGQGFNILSWIFLSIDTTKIDTTLIGFIFLGLGADTAFIPILTVSNLFPDISTFIMTVIGAAASLSYAVPATLNFVYKKYPHFPFYYICYGYIFIILIPCLLVATFLLPMKPFKGLDYYLENDQESDSKNKEQISYTDNDVEMQPSLIQNGNTNVSNNVNKNKATKNIIEGENFHKQSILLFFKVLLSYPSICIIVYFILFNISTVFYGMVTDIYFSYNKSIINIINILMPISFIPCIIFGRFINKYGAAIIIIIMNAFSALMHLTALIKHQAAGLISAFLYMCAASIYTSQIYCFLLNAFPSVVFGKLLGITSLFGGMFSLFCEKLYDNISNSSGNKNDPTTISILLAISFIIMFLPLSILYTRNYEKNIESVNSEKNQIQA</sequence>